<name>FGF7_SHEEP</name>
<gene>
    <name type="primary">FGF7</name>
    <name type="synonym">KGF</name>
</gene>
<accession>P48808</accession>
<keyword id="KW-0325">Glycoprotein</keyword>
<keyword id="KW-0339">Growth factor</keyword>
<keyword id="KW-0358">Heparin-binding</keyword>
<keyword id="KW-0497">Mitogen</keyword>
<keyword id="KW-1185">Reference proteome</keyword>
<keyword id="KW-0732">Signal</keyword>
<sequence>MRKWILTWILPSLLYRSCFHIICLVGTISLACNDMTPEQMATNVNCSSPERHTRSYDYMEGGDIRVRRLFCRTQWYLRIDKRGKVKGTQEMKNNYNIMEIRTVAVGIVAIKGVESEYYLAMNKEGKLYAKKECNEDCNFKELILENHYNTYASAKWTHSGGEMFVALNSKGVPVRGKKTKKEQKTAHFLPMAIT</sequence>
<evidence type="ECO:0000250" key="1"/>
<evidence type="ECO:0000255" key="2"/>
<evidence type="ECO:0000305" key="3"/>
<organism>
    <name type="scientific">Ovis aries</name>
    <name type="common">Sheep</name>
    <dbReference type="NCBI Taxonomy" id="9940"/>
    <lineage>
        <taxon>Eukaryota</taxon>
        <taxon>Metazoa</taxon>
        <taxon>Chordata</taxon>
        <taxon>Craniata</taxon>
        <taxon>Vertebrata</taxon>
        <taxon>Euteleostomi</taxon>
        <taxon>Mammalia</taxon>
        <taxon>Eutheria</taxon>
        <taxon>Laurasiatheria</taxon>
        <taxon>Artiodactyla</taxon>
        <taxon>Ruminantia</taxon>
        <taxon>Pecora</taxon>
        <taxon>Bovidae</taxon>
        <taxon>Caprinae</taxon>
        <taxon>Ovis</taxon>
    </lineage>
</organism>
<comment type="function">
    <text evidence="1">Plays an important role in the regulation of embryonic development, cell proliferation and cell differentiation. Required for normal branching morphogenesis. Growth factor active on keratinocytes. Possible major paracrine effector of normal epithelial cell proliferation (By similarity).</text>
</comment>
<comment type="subunit">
    <text evidence="1">Interacts with FGFBP1. Interacts with FGFR2. Affinity between fibroblast growth factors (FGFs) and their receptors is increased by heparan sulfate glycosaminoglycans that function as coreceptors (By similarity).</text>
</comment>
<comment type="similarity">
    <text evidence="3">Belongs to the heparin-binding growth factors family.</text>
</comment>
<proteinExistence type="evidence at transcript level"/>
<protein>
    <recommendedName>
        <fullName>Fibroblast growth factor 7</fullName>
        <shortName>FGF-7</shortName>
    </recommendedName>
    <alternativeName>
        <fullName>Heparin-binding growth factor 7</fullName>
        <shortName>HBGF-7</shortName>
    </alternativeName>
    <alternativeName>
        <fullName>Keratinocyte growth factor</fullName>
    </alternativeName>
</protein>
<dbReference type="EMBL" id="Z46236">
    <property type="protein sequence ID" value="CAA86306.1"/>
    <property type="molecule type" value="mRNA"/>
</dbReference>
<dbReference type="PIR" id="S49501">
    <property type="entry name" value="S49501"/>
</dbReference>
<dbReference type="SMR" id="P48808"/>
<dbReference type="STRING" id="9940.ENSOARP00000022568"/>
<dbReference type="GlyCosmos" id="P48808">
    <property type="glycosylation" value="1 site, No reported glycans"/>
</dbReference>
<dbReference type="PaxDb" id="9940-ENSOARP00000022568"/>
<dbReference type="eggNOG" id="KOG3885">
    <property type="taxonomic scope" value="Eukaryota"/>
</dbReference>
<dbReference type="Proteomes" id="UP000002356">
    <property type="component" value="Unplaced"/>
</dbReference>
<dbReference type="GO" id="GO:0008083">
    <property type="term" value="F:growth factor activity"/>
    <property type="evidence" value="ECO:0007669"/>
    <property type="project" value="UniProtKB-KW"/>
</dbReference>
<dbReference type="GO" id="GO:0008201">
    <property type="term" value="F:heparin binding"/>
    <property type="evidence" value="ECO:0007669"/>
    <property type="project" value="UniProtKB-KW"/>
</dbReference>
<dbReference type="GO" id="GO:0051781">
    <property type="term" value="P:positive regulation of cell division"/>
    <property type="evidence" value="ECO:0007669"/>
    <property type="project" value="UniProtKB-KW"/>
</dbReference>
<dbReference type="CDD" id="cd23319">
    <property type="entry name" value="beta-trefoil_FGF7"/>
    <property type="match status" value="1"/>
</dbReference>
<dbReference type="FunFam" id="2.80.10.50:FF:000004">
    <property type="entry name" value="Fibroblast growth factor"/>
    <property type="match status" value="1"/>
</dbReference>
<dbReference type="Gene3D" id="2.80.10.50">
    <property type="match status" value="1"/>
</dbReference>
<dbReference type="InterPro" id="IPR002209">
    <property type="entry name" value="Fibroblast_GF_fam"/>
</dbReference>
<dbReference type="InterPro" id="IPR008996">
    <property type="entry name" value="IL1/FGF"/>
</dbReference>
<dbReference type="PANTHER" id="PTHR11486">
    <property type="entry name" value="FIBROBLAST GROWTH FACTOR"/>
    <property type="match status" value="1"/>
</dbReference>
<dbReference type="Pfam" id="PF00167">
    <property type="entry name" value="FGF"/>
    <property type="match status" value="1"/>
</dbReference>
<dbReference type="PRINTS" id="PR00263">
    <property type="entry name" value="HBGFFGF"/>
</dbReference>
<dbReference type="PRINTS" id="PR00262">
    <property type="entry name" value="IL1HBGF"/>
</dbReference>
<dbReference type="SMART" id="SM00442">
    <property type="entry name" value="FGF"/>
    <property type="match status" value="1"/>
</dbReference>
<dbReference type="SUPFAM" id="SSF50353">
    <property type="entry name" value="Cytokine"/>
    <property type="match status" value="1"/>
</dbReference>
<dbReference type="PROSITE" id="PS00247">
    <property type="entry name" value="HBGF_FGF"/>
    <property type="match status" value="1"/>
</dbReference>
<feature type="signal peptide" evidence="1">
    <location>
        <begin position="1"/>
        <end position="31"/>
    </location>
</feature>
<feature type="chain" id="PRO_0000008969" description="Fibroblast growth factor 7">
    <location>
        <begin position="32"/>
        <end position="194"/>
    </location>
</feature>
<feature type="glycosylation site" description="N-linked (GlcNAc...) asparagine" evidence="2">
    <location>
        <position position="45"/>
    </location>
</feature>
<reference key="1">
    <citation type="submission" date="1994-10" db="EMBL/GenBank/DDBJ databases">
        <authorList>
            <person name="Mitchell J.E.A."/>
            <person name="McInnes C.J."/>
        </authorList>
    </citation>
    <scope>NUCLEOTIDE SEQUENCE [MRNA]</scope>
</reference>